<sequence>MNTKEINRVLQDTFNKELTEGKKRHIVFWYDEAGEFIEDIDELNLEGVRIWKLTPHNMFATKLEVEKNDVNSNFLIYANMAKPSAREDWLLDVYKYSQEFATDKMTVMMRELGITNDAALRDVFKKYTKFFKSKEREALFKSFSVPEYTEEQIDLVVLASLCKCNIVNLDEVIKALFREQLKETNKYWENIRKFGNEETFWNLVEKTYGYNLQDKSINSLLIFFLLTNVSETLSGDIPKTWQPYISAIPMNAIVFMNQFMNHSADEVIYNELANTVEKQVKVTEHLQSKEIKDYITSDTFCCFDTNIITYITKQLMNAIHDYTSYIEIIAARRKLHWFSVFRNEYEALYQAIQLFQQIYEMGNAITESQPFDLFKAYESKYHNIDTAYRKFYVAFDQIEDKDGFRALRDKVENIYTNVYINDLAIKWSDALEGEQEEYWPIAGLESQHTFYRSFVQPFVNKEERVFVIISDALRYEVAKELSNMLNVERKASTDIVAMQGVLPSYTDLGMATLLPYKSITFNENAEVYVNDYKASSTENRATILSKHYKDSTAIQYKDLAAMNRQQFRDVFSGKKVSYIYHNVIDARGDHAATEHEVFHAVEQTLKDIRSLVDQLINTVSASNIVITADHGFIYNRDTLQASDKVKKDFLNTDIEKRRFIISSESNSIEGTMNFSMDYVLGEGSGKYVKVPRGANRFAVQGTGANYVHGGAMLQEIVVPVIKFKNDRSKSSKNDVRKVEVKLTSLTRKITNSITYLEFFQTEKIEGKKTPLRLKVYFTDEEGNRISNENIIIADSQSSKPEDRTFKEKFVLKSMTYDKTKKYYLVLEDEEEAVENIYEKVAFPIDIAITNDFGF</sequence>
<organism>
    <name type="scientific">Bacillus cereus (strain H3081.97)</name>
    <dbReference type="NCBI Taxonomy" id="451708"/>
    <lineage>
        <taxon>Bacteria</taxon>
        <taxon>Bacillati</taxon>
        <taxon>Bacillota</taxon>
        <taxon>Bacilli</taxon>
        <taxon>Bacillales</taxon>
        <taxon>Bacillaceae</taxon>
        <taxon>Bacillus</taxon>
        <taxon>Bacillus cereus group</taxon>
    </lineage>
</organism>
<protein>
    <recommendedName>
        <fullName evidence="2">Alkaline phosphatase-like protein PglZ</fullName>
    </recommendedName>
    <alternativeName>
        <fullName evidence="2">BREX protein PglZ</fullName>
    </alternativeName>
</protein>
<feature type="chain" id="PRO_0000452166" description="Alkaline phosphatase-like protein PglZ">
    <location>
        <begin position="1"/>
        <end position="854"/>
    </location>
</feature>
<evidence type="ECO:0000269" key="1">
    <source>
    </source>
</evidence>
<evidence type="ECO:0000303" key="2">
    <source>
    </source>
</evidence>
<evidence type="ECO:0000305" key="3"/>
<accession>P0DUF4</accession>
<comment type="function">
    <text evidence="1">BREX systems (bacteriophage exclusion) provide immunity against bacteriophage. A core protein of a type 1 BREX system. This system allows phage adsorption but prevents phage DNA replication, without degradation of the phage DNA. Methylation of bacterial DNA by PglX probably guides self/non-self discrimination. When the brxA-brxB-brxC-pglX and pglZ-brxL operons are transformed into a susceptible B.subtilis strain (BEST7003) they confer resistance to bacteriophages SPbeta, SP16, Zeta, phi3T and SP02 and partial protection to phages SP01 and SP82G (these include lytic and temperate phage). They do not protect against phages phi105, rho10 or rho14. Additionally confers a very slight reduction in efficiency of plasmid transformation.</text>
</comment>
<comment type="induction">
    <text evidence="1">Part of the pglZ-brxL operon.</text>
</comment>
<comment type="similarity">
    <text evidence="3">Belongs to the alkaline phosphatase superfamily.</text>
</comment>
<proteinExistence type="evidence at protein level"/>
<name>PGLZ_BACCH</name>
<reference key="1">
    <citation type="submission" date="2008-09" db="EMBL/GenBank/DDBJ databases">
        <title>Genome sequence of Bacillus cereus H3081.97.</title>
        <authorList>
            <person name="Dodson R.J."/>
            <person name="Durkin A.S."/>
            <person name="Rosovitz M.J."/>
            <person name="Rasko D.A."/>
            <person name="Hoffmaster A."/>
            <person name="Ravel J."/>
            <person name="Sutton G."/>
        </authorList>
    </citation>
    <scope>NUCLEOTIDE SEQUENCE [LARGE SCALE GENOMIC DNA]</scope>
    <source>
        <strain>H3081.97</strain>
    </source>
</reference>
<reference key="2">
    <citation type="journal article" date="2015" name="EMBO J.">
        <title>BREX is a novel phage resistance system widespread in microbial genomes.</title>
        <authorList>
            <person name="Goldfarb T."/>
            <person name="Sberro H."/>
            <person name="Weinstock E."/>
            <person name="Cohen O."/>
            <person name="Doron S."/>
            <person name="Charpak-Amikam Y."/>
            <person name="Afik S."/>
            <person name="Ofir G."/>
            <person name="Sorek R."/>
        </authorList>
    </citation>
    <scope>FUNCTION IN ANTIVIRAL DEFENSE</scope>
    <scope>INDUCTION</scope>
    <scope>CLASSIFICATION AND NOMENCLATURE</scope>
    <source>
        <strain>H3081.97</strain>
    </source>
</reference>
<dbReference type="EMBL" id="ABDL02000007">
    <property type="protein sequence ID" value="EDZ57605.1"/>
    <property type="molecule type" value="Genomic_DNA"/>
</dbReference>
<dbReference type="GO" id="GO:0051607">
    <property type="term" value="P:defense response to virus"/>
    <property type="evidence" value="ECO:0007669"/>
    <property type="project" value="UniProtKB-KW"/>
</dbReference>
<dbReference type="InterPro" id="IPR017850">
    <property type="entry name" value="Alkaline_phosphatase_core_sf"/>
</dbReference>
<dbReference type="InterPro" id="IPR014060">
    <property type="entry name" value="PglZ"/>
</dbReference>
<dbReference type="InterPro" id="IPR013973">
    <property type="entry name" value="PglZ_dom"/>
</dbReference>
<dbReference type="NCBIfam" id="TIGR02687">
    <property type="entry name" value="BREX-1 system phosphatase PglZ type A"/>
    <property type="match status" value="1"/>
</dbReference>
<dbReference type="Pfam" id="PF08665">
    <property type="entry name" value="PglZ"/>
    <property type="match status" value="1"/>
</dbReference>
<dbReference type="SUPFAM" id="SSF53649">
    <property type="entry name" value="Alkaline phosphatase-like"/>
    <property type="match status" value="1"/>
</dbReference>
<dbReference type="PROSITE" id="PS00142">
    <property type="entry name" value="ZINC_PROTEASE"/>
    <property type="match status" value="1"/>
</dbReference>
<gene>
    <name evidence="2" type="primary">pglZ</name>
    <name type="ORF">BCH308197_0967</name>
</gene>
<keyword id="KW-0051">Antiviral defense</keyword>